<proteinExistence type="evidence at protein level"/>
<accession>O91080</accession>
<organism>
    <name type="scientific">Human immunodeficiency virus type 1 group N (isolate YBF30)</name>
    <name type="common">HIV-1</name>
    <dbReference type="NCBI Taxonomy" id="388818"/>
    <lineage>
        <taxon>Viruses</taxon>
        <taxon>Riboviria</taxon>
        <taxon>Pararnavirae</taxon>
        <taxon>Artverviricota</taxon>
        <taxon>Revtraviricetes</taxon>
        <taxon>Ortervirales</taxon>
        <taxon>Retroviridae</taxon>
        <taxon>Orthoretrovirinae</taxon>
        <taxon>Lentivirus</taxon>
        <taxon>Human immunodeficiency virus type 1</taxon>
    </lineage>
</organism>
<reference key="1">
    <citation type="journal article" date="1998" name="Nat. Med.">
        <title>Identification of a new human immunodeficiency virus type 1 distinct from group M and group O.</title>
        <authorList>
            <person name="Simon F."/>
            <person name="Mauclere P."/>
            <person name="Roques P."/>
            <person name="Loussert-Ajaka I."/>
            <person name="Muller-Trutwin M.C."/>
            <person name="Saragosti S."/>
            <person name="Georges-Courbot M.C."/>
            <person name="Barre-Sinoussi F."/>
            <person name="Brun-Vezinet F."/>
        </authorList>
    </citation>
    <scope>NUCLEOTIDE SEQUENCE [GENOMIC DNA]</scope>
</reference>
<dbReference type="EC" id="3.4.23.16"/>
<dbReference type="EC" id="2.7.7.49"/>
<dbReference type="EC" id="2.7.7.7"/>
<dbReference type="EC" id="3.1.26.13"/>
<dbReference type="EC" id="3.1.13.2"/>
<dbReference type="EC" id="2.7.7.-" evidence="5"/>
<dbReference type="EC" id="3.1.-.-" evidence="5"/>
<dbReference type="EMBL" id="AJ006022">
    <property type="protein sequence ID" value="CAA06810.1"/>
    <property type="molecule type" value="Genomic_DNA"/>
</dbReference>
<dbReference type="PDB" id="7R7W">
    <property type="method" value="X-ray"/>
    <property type="resolution" value="1.17 A"/>
    <property type="chains" value="C=310-318"/>
</dbReference>
<dbReference type="PDB" id="7R7Y">
    <property type="method" value="X-ray"/>
    <property type="resolution" value="1.60 A"/>
    <property type="chains" value="C=310-318"/>
</dbReference>
<dbReference type="PDBsum" id="7R7W"/>
<dbReference type="PDBsum" id="7R7Y"/>
<dbReference type="SMR" id="O91080"/>
<dbReference type="MEROPS" id="A02.001"/>
<dbReference type="PRO" id="PR:O91080"/>
<dbReference type="Proteomes" id="UP000007420">
    <property type="component" value="Segment"/>
</dbReference>
<dbReference type="GO" id="GO:0043657">
    <property type="term" value="C:host cell"/>
    <property type="evidence" value="ECO:0007669"/>
    <property type="project" value="GOC"/>
</dbReference>
<dbReference type="GO" id="GO:0042025">
    <property type="term" value="C:host cell nucleus"/>
    <property type="evidence" value="ECO:0007669"/>
    <property type="project" value="UniProtKB-SubCell"/>
</dbReference>
<dbReference type="GO" id="GO:0020002">
    <property type="term" value="C:host cell plasma membrane"/>
    <property type="evidence" value="ECO:0007669"/>
    <property type="project" value="UniProtKB-SubCell"/>
</dbReference>
<dbReference type="GO" id="GO:0072494">
    <property type="term" value="C:host multivesicular body"/>
    <property type="evidence" value="ECO:0007669"/>
    <property type="project" value="UniProtKB-SubCell"/>
</dbReference>
<dbReference type="GO" id="GO:0016020">
    <property type="term" value="C:membrane"/>
    <property type="evidence" value="ECO:0007669"/>
    <property type="project" value="UniProtKB-KW"/>
</dbReference>
<dbReference type="GO" id="GO:0019013">
    <property type="term" value="C:viral nucleocapsid"/>
    <property type="evidence" value="ECO:0007669"/>
    <property type="project" value="UniProtKB-KW"/>
</dbReference>
<dbReference type="GO" id="GO:0055036">
    <property type="term" value="C:virion membrane"/>
    <property type="evidence" value="ECO:0007669"/>
    <property type="project" value="UniProtKB-SubCell"/>
</dbReference>
<dbReference type="GO" id="GO:0004190">
    <property type="term" value="F:aspartic-type endopeptidase activity"/>
    <property type="evidence" value="ECO:0007669"/>
    <property type="project" value="UniProtKB-KW"/>
</dbReference>
<dbReference type="GO" id="GO:0003677">
    <property type="term" value="F:DNA binding"/>
    <property type="evidence" value="ECO:0007669"/>
    <property type="project" value="UniProtKB-KW"/>
</dbReference>
<dbReference type="GO" id="GO:0003887">
    <property type="term" value="F:DNA-directed DNA polymerase activity"/>
    <property type="evidence" value="ECO:0007669"/>
    <property type="project" value="UniProtKB-KW"/>
</dbReference>
<dbReference type="GO" id="GO:0004533">
    <property type="term" value="F:exoribonuclease H activity"/>
    <property type="evidence" value="ECO:0007669"/>
    <property type="project" value="UniProtKB-EC"/>
</dbReference>
<dbReference type="GO" id="GO:0008289">
    <property type="term" value="F:lipid binding"/>
    <property type="evidence" value="ECO:0007669"/>
    <property type="project" value="UniProtKB-KW"/>
</dbReference>
<dbReference type="GO" id="GO:0035613">
    <property type="term" value="F:RNA stem-loop binding"/>
    <property type="evidence" value="ECO:0007669"/>
    <property type="project" value="TreeGrafter"/>
</dbReference>
<dbReference type="GO" id="GO:0003964">
    <property type="term" value="F:RNA-directed DNA polymerase activity"/>
    <property type="evidence" value="ECO:0007669"/>
    <property type="project" value="UniProtKB-KW"/>
</dbReference>
<dbReference type="GO" id="GO:0004523">
    <property type="term" value="F:RNA-DNA hybrid ribonuclease activity"/>
    <property type="evidence" value="ECO:0007669"/>
    <property type="project" value="InterPro"/>
</dbReference>
<dbReference type="GO" id="GO:0005198">
    <property type="term" value="F:structural molecule activity"/>
    <property type="evidence" value="ECO:0007669"/>
    <property type="project" value="InterPro"/>
</dbReference>
<dbReference type="GO" id="GO:0008270">
    <property type="term" value="F:zinc ion binding"/>
    <property type="evidence" value="ECO:0007669"/>
    <property type="project" value="UniProtKB-KW"/>
</dbReference>
<dbReference type="GO" id="GO:0015074">
    <property type="term" value="P:DNA integration"/>
    <property type="evidence" value="ECO:0007669"/>
    <property type="project" value="UniProtKB-KW"/>
</dbReference>
<dbReference type="GO" id="GO:0006310">
    <property type="term" value="P:DNA recombination"/>
    <property type="evidence" value="ECO:0007669"/>
    <property type="project" value="UniProtKB-KW"/>
</dbReference>
<dbReference type="GO" id="GO:0075713">
    <property type="term" value="P:establishment of integrated proviral latency"/>
    <property type="evidence" value="ECO:0007669"/>
    <property type="project" value="UniProtKB-KW"/>
</dbReference>
<dbReference type="GO" id="GO:0006508">
    <property type="term" value="P:proteolysis"/>
    <property type="evidence" value="ECO:0007669"/>
    <property type="project" value="UniProtKB-KW"/>
</dbReference>
<dbReference type="GO" id="GO:0046718">
    <property type="term" value="P:symbiont entry into host cell"/>
    <property type="evidence" value="ECO:0007669"/>
    <property type="project" value="UniProtKB-KW"/>
</dbReference>
<dbReference type="GO" id="GO:0052151">
    <property type="term" value="P:symbiont-mediated activation of host apoptosis"/>
    <property type="evidence" value="ECO:0007669"/>
    <property type="project" value="UniProtKB-KW"/>
</dbReference>
<dbReference type="GO" id="GO:0039657">
    <property type="term" value="P:symbiont-mediated suppression of host gene expression"/>
    <property type="evidence" value="ECO:0007669"/>
    <property type="project" value="UniProtKB-KW"/>
</dbReference>
<dbReference type="GO" id="GO:0044826">
    <property type="term" value="P:viral genome integration into host DNA"/>
    <property type="evidence" value="ECO:0007669"/>
    <property type="project" value="UniProtKB-KW"/>
</dbReference>
<dbReference type="GO" id="GO:0075732">
    <property type="term" value="P:viral penetration into host nucleus"/>
    <property type="evidence" value="ECO:0007669"/>
    <property type="project" value="UniProtKB-KW"/>
</dbReference>
<dbReference type="GO" id="GO:0075523">
    <property type="term" value="P:viral translational frameshifting"/>
    <property type="evidence" value="ECO:0007669"/>
    <property type="project" value="UniProtKB-KW"/>
</dbReference>
<dbReference type="CDD" id="cd05482">
    <property type="entry name" value="HIV_retropepsin_like"/>
    <property type="match status" value="1"/>
</dbReference>
<dbReference type="CDD" id="cd01645">
    <property type="entry name" value="RT_Rtv"/>
    <property type="match status" value="1"/>
</dbReference>
<dbReference type="FunFam" id="1.10.1200.30:FF:000001">
    <property type="entry name" value="Gag polyprotein"/>
    <property type="match status" value="1"/>
</dbReference>
<dbReference type="FunFam" id="3.30.70.270:FF:000006">
    <property type="entry name" value="Gag-Pol polyprotein"/>
    <property type="match status" value="1"/>
</dbReference>
<dbReference type="FunFam" id="3.30.420.10:FF:000017">
    <property type="entry name" value="POL polyprotein"/>
    <property type="match status" value="1"/>
</dbReference>
<dbReference type="Gene3D" id="1.10.10.200">
    <property type="match status" value="1"/>
</dbReference>
<dbReference type="Gene3D" id="1.10.1200.30">
    <property type="match status" value="1"/>
</dbReference>
<dbReference type="Gene3D" id="3.30.70.270">
    <property type="match status" value="3"/>
</dbReference>
<dbReference type="Gene3D" id="2.40.70.10">
    <property type="entry name" value="Acid Proteases"/>
    <property type="match status" value="1"/>
</dbReference>
<dbReference type="Gene3D" id="3.10.10.10">
    <property type="entry name" value="HIV Type 1 Reverse Transcriptase, subunit A, domain 1"/>
    <property type="match status" value="1"/>
</dbReference>
<dbReference type="Gene3D" id="1.10.375.10">
    <property type="entry name" value="Human Immunodeficiency Virus Type 1 Capsid Protein"/>
    <property type="match status" value="1"/>
</dbReference>
<dbReference type="Gene3D" id="1.10.150.90">
    <property type="entry name" value="Immunodeficiency lentiviruses, gag gene matrix protein p17"/>
    <property type="match status" value="1"/>
</dbReference>
<dbReference type="Gene3D" id="2.30.30.10">
    <property type="entry name" value="Integrase, C-terminal domain superfamily, retroviral"/>
    <property type="match status" value="1"/>
</dbReference>
<dbReference type="Gene3D" id="3.30.420.10">
    <property type="entry name" value="Ribonuclease H-like superfamily/Ribonuclease H"/>
    <property type="match status" value="2"/>
</dbReference>
<dbReference type="Gene3D" id="1.20.5.760">
    <property type="entry name" value="Single helix bin"/>
    <property type="match status" value="1"/>
</dbReference>
<dbReference type="Gene3D" id="4.10.60.10">
    <property type="entry name" value="Zinc finger, CCHC-type"/>
    <property type="match status" value="1"/>
</dbReference>
<dbReference type="InterPro" id="IPR001969">
    <property type="entry name" value="Aspartic_peptidase_AS"/>
</dbReference>
<dbReference type="InterPro" id="IPR043502">
    <property type="entry name" value="DNA/RNA_pol_sf"/>
</dbReference>
<dbReference type="InterPro" id="IPR045345">
    <property type="entry name" value="Gag_p24_C"/>
</dbReference>
<dbReference type="InterPro" id="IPR017856">
    <property type="entry name" value="Integrase-like_N"/>
</dbReference>
<dbReference type="InterPro" id="IPR036862">
    <property type="entry name" value="Integrase_C_dom_sf_retrovir"/>
</dbReference>
<dbReference type="InterPro" id="IPR001037">
    <property type="entry name" value="Integrase_C_retrovir"/>
</dbReference>
<dbReference type="InterPro" id="IPR001584">
    <property type="entry name" value="Integrase_cat-core"/>
</dbReference>
<dbReference type="InterPro" id="IPR003308">
    <property type="entry name" value="Integrase_Zn-bd_dom_N"/>
</dbReference>
<dbReference type="InterPro" id="IPR000071">
    <property type="entry name" value="Lentvrl_matrix_N"/>
</dbReference>
<dbReference type="InterPro" id="IPR012344">
    <property type="entry name" value="Matrix_HIV/RSV_N"/>
</dbReference>
<dbReference type="InterPro" id="IPR001995">
    <property type="entry name" value="Peptidase_A2_cat"/>
</dbReference>
<dbReference type="InterPro" id="IPR021109">
    <property type="entry name" value="Peptidase_aspartic_dom_sf"/>
</dbReference>
<dbReference type="InterPro" id="IPR034170">
    <property type="entry name" value="Retropepsin-like_cat_dom"/>
</dbReference>
<dbReference type="InterPro" id="IPR018061">
    <property type="entry name" value="Retropepsins"/>
</dbReference>
<dbReference type="InterPro" id="IPR008916">
    <property type="entry name" value="Retrov_capsid_C"/>
</dbReference>
<dbReference type="InterPro" id="IPR008919">
    <property type="entry name" value="Retrov_capsid_N"/>
</dbReference>
<dbReference type="InterPro" id="IPR010999">
    <property type="entry name" value="Retrovr_matrix"/>
</dbReference>
<dbReference type="InterPro" id="IPR043128">
    <property type="entry name" value="Rev_trsase/Diguanyl_cyclase"/>
</dbReference>
<dbReference type="InterPro" id="IPR012337">
    <property type="entry name" value="RNaseH-like_sf"/>
</dbReference>
<dbReference type="InterPro" id="IPR002156">
    <property type="entry name" value="RNaseH_domain"/>
</dbReference>
<dbReference type="InterPro" id="IPR036397">
    <property type="entry name" value="RNaseH_sf"/>
</dbReference>
<dbReference type="InterPro" id="IPR000477">
    <property type="entry name" value="RT_dom"/>
</dbReference>
<dbReference type="InterPro" id="IPR010659">
    <property type="entry name" value="RVT_connect"/>
</dbReference>
<dbReference type="InterPro" id="IPR010661">
    <property type="entry name" value="RVT_thumb"/>
</dbReference>
<dbReference type="InterPro" id="IPR001878">
    <property type="entry name" value="Znf_CCHC"/>
</dbReference>
<dbReference type="InterPro" id="IPR036875">
    <property type="entry name" value="Znf_CCHC_sf"/>
</dbReference>
<dbReference type="PANTHER" id="PTHR41694">
    <property type="entry name" value="ENDOGENOUS RETROVIRUS GROUP K MEMBER POL PROTEIN"/>
    <property type="match status" value="1"/>
</dbReference>
<dbReference type="PANTHER" id="PTHR41694:SF3">
    <property type="entry name" value="RNA-DIRECTED DNA POLYMERASE-RELATED"/>
    <property type="match status" value="1"/>
</dbReference>
<dbReference type="Pfam" id="PF00540">
    <property type="entry name" value="Gag_p17"/>
    <property type="match status" value="1"/>
</dbReference>
<dbReference type="Pfam" id="PF19317">
    <property type="entry name" value="Gag_p24_C"/>
    <property type="match status" value="1"/>
</dbReference>
<dbReference type="Pfam" id="PF00552">
    <property type="entry name" value="IN_DBD_C"/>
    <property type="match status" value="1"/>
</dbReference>
<dbReference type="Pfam" id="PF02022">
    <property type="entry name" value="Integrase_Zn"/>
    <property type="match status" value="1"/>
</dbReference>
<dbReference type="Pfam" id="PF00075">
    <property type="entry name" value="RNase_H"/>
    <property type="match status" value="1"/>
</dbReference>
<dbReference type="Pfam" id="PF00665">
    <property type="entry name" value="rve"/>
    <property type="match status" value="1"/>
</dbReference>
<dbReference type="Pfam" id="PF00077">
    <property type="entry name" value="RVP"/>
    <property type="match status" value="1"/>
</dbReference>
<dbReference type="Pfam" id="PF00078">
    <property type="entry name" value="RVT_1"/>
    <property type="match status" value="1"/>
</dbReference>
<dbReference type="Pfam" id="PF06815">
    <property type="entry name" value="RVT_connect"/>
    <property type="match status" value="1"/>
</dbReference>
<dbReference type="Pfam" id="PF06817">
    <property type="entry name" value="RVT_thumb"/>
    <property type="match status" value="1"/>
</dbReference>
<dbReference type="Pfam" id="PF00098">
    <property type="entry name" value="zf-CCHC"/>
    <property type="match status" value="2"/>
</dbReference>
<dbReference type="PRINTS" id="PR00234">
    <property type="entry name" value="HIV1MATRIX"/>
</dbReference>
<dbReference type="SMART" id="SM00343">
    <property type="entry name" value="ZnF_C2HC"/>
    <property type="match status" value="2"/>
</dbReference>
<dbReference type="SUPFAM" id="SSF50630">
    <property type="entry name" value="Acid proteases"/>
    <property type="match status" value="1"/>
</dbReference>
<dbReference type="SUPFAM" id="SSF50122">
    <property type="entry name" value="DNA-binding domain of retroviral integrase"/>
    <property type="match status" value="1"/>
</dbReference>
<dbReference type="SUPFAM" id="SSF56672">
    <property type="entry name" value="DNA/RNA polymerases"/>
    <property type="match status" value="1"/>
</dbReference>
<dbReference type="SUPFAM" id="SSF46919">
    <property type="entry name" value="N-terminal Zn binding domain of HIV integrase"/>
    <property type="match status" value="1"/>
</dbReference>
<dbReference type="SUPFAM" id="SSF47836">
    <property type="entry name" value="Retroviral matrix proteins"/>
    <property type="match status" value="1"/>
</dbReference>
<dbReference type="SUPFAM" id="SSF47353">
    <property type="entry name" value="Retrovirus capsid dimerization domain-like"/>
    <property type="match status" value="1"/>
</dbReference>
<dbReference type="SUPFAM" id="SSF47943">
    <property type="entry name" value="Retrovirus capsid protein, N-terminal core domain"/>
    <property type="match status" value="1"/>
</dbReference>
<dbReference type="SUPFAM" id="SSF57756">
    <property type="entry name" value="Retrovirus zinc finger-like domains"/>
    <property type="match status" value="1"/>
</dbReference>
<dbReference type="SUPFAM" id="SSF53098">
    <property type="entry name" value="Ribonuclease H-like"/>
    <property type="match status" value="2"/>
</dbReference>
<dbReference type="PROSITE" id="PS50175">
    <property type="entry name" value="ASP_PROT_RETROV"/>
    <property type="match status" value="1"/>
</dbReference>
<dbReference type="PROSITE" id="PS00141">
    <property type="entry name" value="ASP_PROTEASE"/>
    <property type="match status" value="1"/>
</dbReference>
<dbReference type="PROSITE" id="PS50994">
    <property type="entry name" value="INTEGRASE"/>
    <property type="match status" value="1"/>
</dbReference>
<dbReference type="PROSITE" id="PS51027">
    <property type="entry name" value="INTEGRASE_DBD"/>
    <property type="match status" value="1"/>
</dbReference>
<dbReference type="PROSITE" id="PS50879">
    <property type="entry name" value="RNASE_H_1"/>
    <property type="match status" value="1"/>
</dbReference>
<dbReference type="PROSITE" id="PS50878">
    <property type="entry name" value="RT_POL"/>
    <property type="match status" value="1"/>
</dbReference>
<dbReference type="PROSITE" id="PS50158">
    <property type="entry name" value="ZF_CCHC"/>
    <property type="match status" value="2"/>
</dbReference>
<dbReference type="PROSITE" id="PS50876">
    <property type="entry name" value="ZF_INTEGRASE"/>
    <property type="match status" value="1"/>
</dbReference>
<gene>
    <name type="primary">gag-pol</name>
</gene>
<comment type="function">
    <molecule>Gag-Pol polyprotein</molecule>
    <text evidence="1">Mediates, with Gag polyprotein, the essential events in virion assembly, including binding the plasma membrane, making the protein-protein interactions necessary to create spherical particles, recruiting the viral Env proteins, and packaging the genomic RNA via direct interactions with the RNA packaging sequence (Psi). Gag-Pol polyprotein may regulate its own translation, by the binding genomic RNA in the 5'-UTR. At low concentration, the polyprotein would promote translation, whereas at high concentration, the polyprotein would encapsidate genomic RNA and then shut off translation.</text>
</comment>
<comment type="function">
    <molecule>Matrix protein p17</molecule>
    <text evidence="7">Targets the polyprotein to the plasma membrane via a multipartite membrane-binding signal, that includes its myristoylated N-terminus. Matrix protein is part of the pre-integration complex. Implicated in the release from host cell mediated by Vpu. Binds to RNA.</text>
</comment>
<comment type="function">
    <molecule>Capsid protein p24</molecule>
    <text evidence="5 7">Forms the conical core that encapsulates the genomic RNA-nucleocapsid complex in the virion. Most core are conical, with only 7% tubular. The core is constituted by capsid protein hexamer subunits. The core is disassembled soon after virion entry (By similarity). Host restriction factors such as TRIM5-alpha or TRIMCyp bind retroviral capsids and cause premature capsid disassembly, leading to blocks in reverse transcription. Capsid restriction by TRIM5 is one of the factors which restricts HIV-1 to the human species. Host PIN1 apparently facilitates the virion uncoating. On the other hand, interactions with PDZD8 or CYPA stabilize the capsid.</text>
</comment>
<comment type="function">
    <molecule>Nucleocapsid protein p7</molecule>
    <text evidence="5">Encapsulates and protects viral dimeric unspliced genomic RNA (gRNA). Binds these RNAs through its zinc fingers. Acts as a nucleic acid chaperone which is involved in rearangement of nucleic acid secondary structure during gRNA retrotranscription. Also facilitates template switch leading to recombination. As part of the polyprotein, participates in gRNA dimerization, packaging, tRNA incorporation and virion assembly.</text>
</comment>
<comment type="function">
    <molecule>Protease</molecule>
    <text evidence="5 10">Aspartyl protease that mediates proteolytic cleavages of Gag and Gag-Pol polyproteins during or shortly after the release of the virion from the plasma membrane. Cleavages take place as an ordered, step-wise cascade to yield mature proteins. This process is called maturation. Displays maximal activity during the budding process just prior to particle release from the cell. Also cleaves Nef and Vif, probably concomitantly with viral structural proteins on maturation of virus particles. Hydrolyzes host EIF4GI and PABP1 in order to shut off the capped cellular mRNA translation. The resulting inhibition of cellular protein synthesis serves to ensure maximal viral gene expression and to evade host immune response. Also mediates cleavage of host YTHDF3. Mediates cleavage of host CARD8, thereby activating the CARD8 inflammasome, leading to the clearance of latent HIV-1 in patient CD4(+) T-cells after viral reactivation; in contrast, HIV-1 can evade CARD8-sensing when its protease remains inactive in infected cells prior to viral budding (By similarity).</text>
</comment>
<comment type="function">
    <molecule>Reverse transcriptase/ribonuclease H</molecule>
    <text evidence="5">Multifunctional enzyme that converts the viral RNA genome into dsDNA in the cytoplasm, shortly after virus entry into the cell. This enzyme displays a DNA polymerase activity that can copy either DNA or RNA templates, and a ribonuclease H (RNase H) activity that cleaves the RNA strand of RNA-DNA heteroduplexes in a partially processive 3' to 5' endonucleasic mode. Conversion of viral genomic RNA into dsDNA requires many steps. A tRNA(3)-Lys binds to the primer-binding site (PBS) situated at the 5'-end of the viral RNA. RT uses the 3' end of the tRNA primer to perform a short round of RNA-dependent minus-strand DNA synthesis. The reading proceeds through the U5 region and ends after the repeated (R) region which is present at both ends of viral RNA. The portion of the RNA-DNA heteroduplex is digested by the RNase H, resulting in a ssDNA product attached to the tRNA primer. This ssDNA/tRNA hybridizes with the identical R region situated at the 3' end of viral RNA. This template exchange, known as minus-strand DNA strong stop transfer, can be either intra- or intermolecular. RT uses the 3' end of this newly synthesized short ssDNA to perform the RNA-dependent minus-strand DNA synthesis of the whole template. RNase H digests the RNA template except for two polypurine tracts (PPTs) situated at the 5'-end and near the center of the genome. It is not clear if both polymerase and RNase H activities are simultaneous. RNase H probably can proceed both in a polymerase-dependent (RNA cut into small fragments by the same RT performing DNA synthesis) and a polymerase-independent mode (cleavage of remaining RNA fragments by free RTs). Secondly, RT performs DNA-directed plus-strand DNA synthesis using the PPTs that have not been removed by RNase H as primers. PPTs and tRNA primers are then removed by RNase H. The 3' and 5' ssDNA PBS regions hybridize to form a circular dsDNA intermediate. Strand displacement synthesis by RT to the PBS and PPT ends produces a blunt ended, linear dsDNA copy of the viral genome that includes long terminal repeats (LTRs) at both ends.</text>
</comment>
<comment type="function">
    <molecule>Integrase</molecule>
    <text evidence="5">Catalyzes viral DNA integration into the host chromosome, by performing a series of DNA cutting and joining reactions. This enzyme activity takes place after virion entry into a cell and reverse transcription of the RNA genome in dsDNA. The first step in the integration process is 3' processing. This step requires a complex comprising the viral genome, matrix protein, Vpr and integrase. This complex is called the pre-integration complex (PIC). The integrase protein removes 2 nucleotides from each 3' end of the viral DNA, leaving recessed CA OH's at the 3' ends. In the second step, the PIC enters cell nucleus. This process is mediated through integrase and Vpr proteins, and allows the virus to infect a non dividing cell. This ability to enter the nucleus is specific of lentiviruses, other retroviruses cannot and rely on cell division to access cell chromosomes. In the third step, termed strand transfer, the integrase protein joins the previously processed 3' ends to the 5' ends of strands of target cellular DNA at the site of integration. The 5'-ends are produced by integrase-catalyzed staggered cuts, 5 bp apart. A Y-shaped, gapped, recombination intermediate results, with the 5'-ends of the viral DNA strands and the 3' ends of target DNA strands remaining unjoined, flanking a gap of 5 bp. The last step is viral DNA integration into host chromosome. This involves host DNA repair synthesis in which the 5 bp gaps between the unjoined strands are filled in and then ligated. Since this process occurs at both cuts flanking the HIV genome, a 5 bp duplication of host DNA is produced at the ends of HIV-1 integration. Alternatively, Integrase may catalyze the excision of viral DNA just after strand transfer, this is termed disintegration.</text>
</comment>
<comment type="catalytic activity">
    <reaction evidence="10">
        <text>Specific for a P1 residue that is hydrophobic, and P1' variable, but often Pro.</text>
        <dbReference type="EC" id="3.4.23.16"/>
    </reaction>
</comment>
<comment type="catalytic activity">
    <reaction evidence="1">
        <text>Endohydrolysis of RNA in RNA/DNA hybrids. Three different cleavage modes: 1. sequence-specific internal cleavage of RNA. Human immunodeficiency virus type 1 and Moloney murine leukemia virus enzymes prefer to cleave the RNA strand one nucleotide away from the RNA-DNA junction. 2. RNA 5'-end directed cleavage 13-19 nucleotides from the RNA end. 3. DNA 3'-end directed cleavage 15-20 nucleotides away from the primer terminus.</text>
        <dbReference type="EC" id="3.1.26.13"/>
    </reaction>
</comment>
<comment type="catalytic activity">
    <reaction evidence="1">
        <text>3'-end directed exonucleolytic cleavage of viral RNA-DNA hybrid.</text>
        <dbReference type="EC" id="3.1.13.2"/>
    </reaction>
</comment>
<comment type="catalytic activity">
    <reaction evidence="11">
        <text>DNA(n) + a 2'-deoxyribonucleoside 5'-triphosphate = DNA(n+1) + diphosphate</text>
        <dbReference type="Rhea" id="RHEA:22508"/>
        <dbReference type="Rhea" id="RHEA-COMP:17339"/>
        <dbReference type="Rhea" id="RHEA-COMP:17340"/>
        <dbReference type="ChEBI" id="CHEBI:33019"/>
        <dbReference type="ChEBI" id="CHEBI:61560"/>
        <dbReference type="ChEBI" id="CHEBI:173112"/>
        <dbReference type="EC" id="2.7.7.49"/>
    </reaction>
</comment>
<comment type="catalytic activity">
    <reaction evidence="11">
        <text>DNA(n) + a 2'-deoxyribonucleoside 5'-triphosphate = DNA(n+1) + diphosphate</text>
        <dbReference type="Rhea" id="RHEA:22508"/>
        <dbReference type="Rhea" id="RHEA-COMP:17339"/>
        <dbReference type="Rhea" id="RHEA-COMP:17340"/>
        <dbReference type="ChEBI" id="CHEBI:33019"/>
        <dbReference type="ChEBI" id="CHEBI:61560"/>
        <dbReference type="ChEBI" id="CHEBI:173112"/>
        <dbReference type="EC" id="2.7.7.7"/>
    </reaction>
</comment>
<comment type="cofactor">
    <cofactor evidence="1">
        <name>Mg(2+)</name>
        <dbReference type="ChEBI" id="CHEBI:18420"/>
    </cofactor>
    <text evidence="1">Binds 2 magnesium ions for reverse transcriptase polymerase activity.</text>
</comment>
<comment type="cofactor">
    <cofactor evidence="1">
        <name>Mg(2+)</name>
        <dbReference type="ChEBI" id="CHEBI:18420"/>
    </cofactor>
    <text evidence="1">Binds 2 magnesium ions for ribonuclease H (RNase H) activity. Substrate-binding is a precondition for magnesium binding.</text>
</comment>
<comment type="cofactor">
    <cofactor evidence="1">
        <name>Mg(2+)</name>
        <dbReference type="ChEBI" id="CHEBI:18420"/>
    </cofactor>
    <text evidence="1">Magnesium ions are required for integrase activity. Binds at least 1, maybe 2 magnesium ions.</text>
</comment>
<comment type="activity regulation">
    <text evidence="1">Protease: The viral protease is inhibited by many synthetic protease inhibitors (PIs), such as amprenavir, atazanavir, indinavir, loprinavir, nelfinavir, ritonavir and saquinavir. Use of protease inhibitors in tritherapy regimens permit more ambitious therapeutic strategies. Reverse transcriptase/ribonuclease H: RT can be inhibited either by nucleoside RT inhibitors (NRTIs) or by non nucleoside RT inhibitors (NNRTIs). NRTIs act as chain terminators, whereas NNRTIs inhibit DNA polymerization by binding a small hydrophobic pocket near the RT active site and inducing an allosteric change in this region. Classical NRTIs are abacavir, adefovir (PMEA), didanosine (ddI), lamivudine (3TC), stavudine (d4T), tenofovir (PMPA), zalcitabine (ddC), and zidovudine (AZT). Classical NNRTIs are atevirdine (BHAP U-87201E), delavirdine, efavirenz (DMP-266), emivirine (I-EBU), and nevirapine (BI-RG-587). The tritherapies used as a basic effective treatment of AIDS associate two NRTIs and one NNRTI.</text>
</comment>
<comment type="subunit">
    <molecule>Matrix protein p17</molecule>
    <text evidence="5 7">Homotrimer; further assembles as hexamers of trimers (By similarity). Interacts with gp41 (via C-terminus) (By similarity). Interacts with host CALM1; this interaction induces a conformational change in the Matrix protein, triggering exposure of the myristate group (By similarity). Interacts with host AP3D1; this interaction allows the polyprotein trafficking to multivesicular bodies during virus assembly (By similarity). Part of the pre-integration complex (PIC) which is composed of viral genome, matrix protein, Vpr and integrase (By similarity).</text>
</comment>
<comment type="subunit">
    <molecule>Capsid protein p24</molecule>
    <text evidence="5 7">Homodimer; the homodimer further multimerizes as homohexamers or homopentamers. Interacts with human PPIA/CYPA (By similarity); This interaction stabilizes the capsid. Interacts with human NUP153 (By similarity). Interacts with host PDZD8; this interaction stabilizes the capsid (By similarity). Interacts with monkey TRIM5; this interaction destabilizes the capsid (By similarity).</text>
</comment>
<comment type="subunit">
    <molecule>Protease</molecule>
    <text evidence="5 7">Homodimer, whose active site consists of two apposed aspartic acid residues.</text>
</comment>
<comment type="subunit">
    <molecule>Reverse transcriptase/ribonuclease H</molecule>
    <text evidence="3">Heterodimer of p66 RT and p51 RT (RT p66/p51) (By similarity). Heterodimerization of RT is essential for DNA polymerase activity (By similarity). The overall folding of the subdomains is similar in p66 RT and p51 RT but the spatial arrangements of the subdomains are dramatically different (By similarity).</text>
</comment>
<comment type="subunit">
    <molecule>Integrase</molecule>
    <text evidence="4 5 7">Homotetramer; may further associate as a homohexadecamer (By similarity). Part of the pre-integration complex (PIC) which is composed of viral genome, matrix protein, Vpr and integrase. Interacts with human SMARCB1/INI1 and human PSIP1/LEDGF isoform 1. Interacts with human KPNA3; this interaction might play a role in nuclear import of the pre-integration complex (By similarity). Interacts with human NUP153; this interaction might play a role in nuclear import of the pre-integration complex (By similarity).</text>
</comment>
<comment type="subcellular location">
    <molecule>Gag-Pol polyprotein</molecule>
    <subcellularLocation>
        <location>Host cell membrane</location>
        <topology>Lipid-anchor</topology>
    </subcellularLocation>
    <subcellularLocation>
        <location>Host endosome</location>
        <location>Host multivesicular body</location>
    </subcellularLocation>
    <text evidence="7">These locations are linked to virus assembly sites. The main location is the cell membrane, but under some circumstances, late endosomal compartments can serve as productive sites for virion assembly.</text>
</comment>
<comment type="subcellular location">
    <molecule>Matrix protein p17</molecule>
    <subcellularLocation>
        <location>Virion membrane</location>
        <topology evidence="18">Lipid-anchor</topology>
    </subcellularLocation>
    <subcellularLocation>
        <location evidence="1">Host nucleus</location>
    </subcellularLocation>
    <subcellularLocation>
        <location evidence="1">Host cytoplasm</location>
    </subcellularLocation>
</comment>
<comment type="subcellular location">
    <molecule>Capsid protein p24</molecule>
    <subcellularLocation>
        <location evidence="18">Virion</location>
    </subcellularLocation>
</comment>
<comment type="subcellular location">
    <molecule>Nucleocapsid protein p7</molecule>
    <subcellularLocation>
        <location evidence="18">Virion</location>
    </subcellularLocation>
</comment>
<comment type="subcellular location">
    <molecule>Reverse transcriptase/ribonuclease H</molecule>
    <subcellularLocation>
        <location evidence="18">Virion</location>
    </subcellularLocation>
</comment>
<comment type="subcellular location">
    <molecule>Integrase</molecule>
    <subcellularLocation>
        <location evidence="18">Virion</location>
    </subcellularLocation>
    <subcellularLocation>
        <location evidence="18">Host nucleus</location>
    </subcellularLocation>
    <subcellularLocation>
        <location evidence="18">Host cytoplasm</location>
    </subcellularLocation>
    <text evidence="18">Nuclear at initial phase, cytoplasmic at assembly.</text>
</comment>
<comment type="alternative products">
    <event type="ribosomal frameshifting"/>
    <isoform>
        <id>O91080-1</id>
        <name>Gag-Pol polyprotein</name>
        <sequence type="displayed"/>
    </isoform>
    <isoform>
        <id>O91079-1</id>
        <name>Gag polyprotein</name>
        <sequence type="external"/>
    </isoform>
    <text>Translation results in the formation of the Gag polyprotein most of the time. Ribosomal frameshifting at the gag-pol genes boundary occurs at low frequency and produces the Gag-Pol polyprotein. This strategy of translation probably allows the virus to modulate the quantity of each viral protein. Maintenance of a correct Gag to Gag-Pol ratio is essential for RNA dimerization and viral infectivity.</text>
</comment>
<comment type="domain">
    <molecule>Reverse transcriptase/ribonuclease H</molecule>
    <text evidence="1">RT is structured in five subdomains: finger, palm, thumb, connection and RNase H. Within the palm subdomain, the 'primer grip' region is thought to be involved in the positioning of the primer terminus for accommodating the incoming nucleotide. The RNase H domain stabilizes the association of RT with primer-template.</text>
</comment>
<comment type="domain">
    <molecule>Reverse transcriptase/ribonuclease H</molecule>
    <text evidence="1">The tryptophan repeat motif is involved in RT p66/p51 dimerization (By similarity).</text>
</comment>
<comment type="domain">
    <molecule>Integrase</molecule>
    <text evidence="1">The core domain contains the D-x(n)-D-x(35)-E motif, named for the phylogenetically conserved glutamic acid and aspartic acid residues and the invariant 35 amino acid spacing between the second and third acidic residues. Each acidic residue of the D,D(35)E motif is independently essential for the 3'-processing and strand transfer activities of purified integrase protein.</text>
</comment>
<comment type="PTM">
    <molecule>Gag-Pol polyprotein</molecule>
    <text evidence="5 11">Specific enzymatic cleavages by the viral protease yield mature proteins. The protease is released by autocatalytic cleavage. The polyprotein is cleaved during and after budding, this process is termed maturation. Proteolytic cleavage of p66 RT removes the RNase H domain to yield the p51 RT subunit. Nucleocapsid protein p7 might be further cleaved after virus entry.</text>
</comment>
<comment type="PTM">
    <molecule>Matrix protein p17</molecule>
    <text evidence="5">Tyrosine phosphorylated presumably in the virion by a host kinase. Phosphorylation is apparently not a major regulator of membrane association.</text>
</comment>
<comment type="PTM">
    <molecule>Capsid protein p24</molecule>
    <text evidence="6">Phosphorylated possibly by host MAPK1; this phosphorylation is necessary for Pin1-mediated virion uncoating.</text>
</comment>
<comment type="PTM">
    <molecule>Nucleocapsid protein p7</molecule>
    <text evidence="2">Methylated by host PRMT6, impairing its function by reducing RNA annealing and the initiation of reverse transcription.</text>
</comment>
<comment type="miscellaneous">
    <molecule>Reverse transcriptase/ribonuclease H</molecule>
    <text evidence="1">Error-prone enzyme that lacks a proof-reading function. High mutations rate is a direct consequence of this characteristic. RT also displays frequent template switching leading to high recombination rate. Recombination mostly occurs between homologous regions of the two copackaged RNA genomes. If these two RNA molecules derive from different viral strains, reverse transcription will give rise to highly recombinated proviral DNAs.</text>
</comment>
<comment type="miscellaneous">
    <text>HIV-1 lineages are divided in three main groups, M (for Major), O (for Outlier), and N (for New, or Non-M, Non-O). The vast majority of strains found worldwide belong to the group M. Group O seems to be endemic to and largely confined to Cameroon and neighboring countries in West Central Africa, where these viruses represent a small minority of HIV-1 strains. The group N is represented by a limited number of isolates from Cameroonian persons. The group M is further subdivided in 9 clades or subtypes (A to D, F to H, J and K).</text>
</comment>
<comment type="miscellaneous">
    <text>Resistance to inhibitors associated with mutations are observed both in viral protease and in reverse transcriptase. Most of the time, single mutations confer only a modest reduction in drug susceptibility. Combination of several mutations is usually required to develop a high-level drug resistance. These mutations are predominantly found in clade B viruses and not in other genotypes. They are listed in the clade B representative isolate HXB2 (AC P04585).</text>
</comment>
<comment type="miscellaneous">
    <molecule>Isoform Gag-Pol polyprotein</molecule>
    <text>Produced by -1 ribosomal frameshifting.</text>
</comment>
<comment type="online information" name="HIV drug resistance mutations">
    <link uri="https://www.iasusa.org/hiv-drug-resistance/hiv-drug-resistance-mutations/"/>
</comment>
<comment type="online information" name="hivdb">
    <link uri="https://hivdb.stanford.edu"/>
    <text>HIV drug resistance database</text>
</comment>
<keyword id="KW-0002">3D-structure</keyword>
<keyword id="KW-1073">Activation of host caspases by virus</keyword>
<keyword id="KW-0014">AIDS</keyword>
<keyword id="KW-0064">Aspartyl protease</keyword>
<keyword id="KW-0167">Capsid protein</keyword>
<keyword id="KW-0229">DNA integration</keyword>
<keyword id="KW-0233">DNA recombination</keyword>
<keyword id="KW-0238">DNA-binding</keyword>
<keyword id="KW-0239">DNA-directed DNA polymerase</keyword>
<keyword id="KW-0255">Endonuclease</keyword>
<keyword id="KW-1262">Eukaryotic host gene expression shutoff by virus</keyword>
<keyword id="KW-1193">Eukaryotic host translation shutoff by virus</keyword>
<keyword id="KW-1032">Host cell membrane</keyword>
<keyword id="KW-1035">Host cytoplasm</keyword>
<keyword id="KW-1039">Host endosome</keyword>
<keyword id="KW-1190">Host gene expression shutoff by virus</keyword>
<keyword id="KW-1043">Host membrane</keyword>
<keyword id="KW-1048">Host nucleus</keyword>
<keyword id="KW-0945">Host-virus interaction</keyword>
<keyword id="KW-0378">Hydrolase</keyword>
<keyword id="KW-0446">Lipid-binding</keyword>
<keyword id="KW-0449">Lipoprotein</keyword>
<keyword id="KW-0460">Magnesium</keyword>
<keyword id="KW-0472">Membrane</keyword>
<keyword id="KW-0479">Metal-binding</keyword>
<keyword id="KW-1119">Modulation of host cell apoptosis by virus</keyword>
<keyword id="KW-0511">Multifunctional enzyme</keyword>
<keyword id="KW-0519">Myristate</keyword>
<keyword id="KW-0540">Nuclease</keyword>
<keyword id="KW-0548">Nucleotidyltransferase</keyword>
<keyword id="KW-0597">Phosphoprotein</keyword>
<keyword id="KW-0645">Protease</keyword>
<keyword id="KW-1185">Reference proteome</keyword>
<keyword id="KW-0677">Repeat</keyword>
<keyword id="KW-0688">Ribosomal frameshifting</keyword>
<keyword id="KW-0694">RNA-binding</keyword>
<keyword id="KW-0695">RNA-directed DNA polymerase</keyword>
<keyword id="KW-0808">Transferase</keyword>
<keyword id="KW-1179">Viral genome integration</keyword>
<keyword id="KW-0543">Viral nucleoprotein</keyword>
<keyword id="KW-1163">Viral penetration into host nucleus</keyword>
<keyword id="KW-1188">Viral release from host cell</keyword>
<keyword id="KW-0946">Virion</keyword>
<keyword id="KW-0917">Virion maturation</keyword>
<keyword id="KW-1160">Virus entry into host cell</keyword>
<keyword id="KW-0862">Zinc</keyword>
<keyword id="KW-0863">Zinc-finger</keyword>
<organismHost>
    <name type="scientific">Homo sapiens</name>
    <name type="common">Human</name>
    <dbReference type="NCBI Taxonomy" id="9606"/>
</organismHost>
<evidence type="ECO:0000250" key="1"/>
<evidence type="ECO:0000250" key="2">
    <source>
        <dbReference type="UniProtKB" id="P03347"/>
    </source>
</evidence>
<evidence type="ECO:0000250" key="3">
    <source>
        <dbReference type="UniProtKB" id="P03366"/>
    </source>
</evidence>
<evidence type="ECO:0000250" key="4">
    <source>
        <dbReference type="UniProtKB" id="P03367"/>
    </source>
</evidence>
<evidence type="ECO:0000250" key="5">
    <source>
        <dbReference type="UniProtKB" id="P04585"/>
    </source>
</evidence>
<evidence type="ECO:0000250" key="6">
    <source>
        <dbReference type="UniProtKB" id="P12493"/>
    </source>
</evidence>
<evidence type="ECO:0000250" key="7">
    <source>
        <dbReference type="UniProtKB" id="P12497"/>
    </source>
</evidence>
<evidence type="ECO:0000255" key="8"/>
<evidence type="ECO:0000255" key="9">
    <source>
        <dbReference type="PROSITE-ProRule" id="PRU00047"/>
    </source>
</evidence>
<evidence type="ECO:0000255" key="10">
    <source>
        <dbReference type="PROSITE-ProRule" id="PRU00275"/>
    </source>
</evidence>
<evidence type="ECO:0000255" key="11">
    <source>
        <dbReference type="PROSITE-ProRule" id="PRU00405"/>
    </source>
</evidence>
<evidence type="ECO:0000255" key="12">
    <source>
        <dbReference type="PROSITE-ProRule" id="PRU00408"/>
    </source>
</evidence>
<evidence type="ECO:0000255" key="13">
    <source>
        <dbReference type="PROSITE-ProRule" id="PRU00450"/>
    </source>
</evidence>
<evidence type="ECO:0000255" key="14">
    <source>
        <dbReference type="PROSITE-ProRule" id="PRU00457"/>
    </source>
</evidence>
<evidence type="ECO:0000255" key="15">
    <source>
        <dbReference type="PROSITE-ProRule" id="PRU00506"/>
    </source>
</evidence>
<evidence type="ECO:0000255" key="16">
    <source>
        <dbReference type="PROSITE-ProRule" id="PRU10094"/>
    </source>
</evidence>
<evidence type="ECO:0000256" key="17">
    <source>
        <dbReference type="SAM" id="MobiDB-lite"/>
    </source>
</evidence>
<evidence type="ECO:0000305" key="18"/>
<sequence>MGARASVLTGGKLDQWESIYLRPGGKKKYRMKHLVWASRELERFACNPGLMDTADGCAKLLNQLEPALKTGSEELRSLYNALAVLYCVHSRIQIHNTQEALDKIKEKQEQHKPEPKNPEAGAAAATDSNISRNYPLVQTAQGQMVHQPLTPRTLNAWVKVIEEKAFSPEVIPMFMALSEGATPSDLNTMLNTVGGHQAAMQMLKEVINEEAADWDRTHPVPVGPLPPGQLRDPRGSDIAGTTSTLAEQVAWMTANPPVPVGDIYRRWIVLGLNRIVRMYSPVSILEIKQGPKEPFRDYVDRFYKTLRAEQATQEVKNWMTETLLVQNANPDCKQLLKALGPGATLEEMMTACQGVGGPAHKARVLAEAMSQVQQPTTSVFAQRGNFKGIRKPIKCFNCGKEGHLARNCKAPRRGGCWKCGQEGHQMKDCKNEGRQFFREELVSLQRETRKLPPDNNKERAHSPATRELWVSGGEEHTGEGDAGEPGEDRELSVPTFNFPQITLWQRPVITVKIGKEVREALLDTGADDTVIEELQLEGKWKPKMIGGIGGFIKVRQYDNITVDIQGRKAVGTVLVGPTPVNIIGRNLLTQIGCTLNFPISPIETVPVKLKPGMDGPKVKQWPLTTEKIEALREICTEMEKEGKISRIGPENPYNTPIFAIKKKDSTKWRKLVDFRELNKRTQDFWEVQLGIPHPAGLKQKKSVTVLDVGDAYFSCPLDKDFRKYTAFTIPSINNETPGIRYQYNVLPQGWKGSPAIFQSTMTKILEPFREKHPEIIIYQYMDDLYVGSDLELAQHREAVEDLRDHLLKWGFTTPDKKHQKEPPFLWMGYELHPDKWTVQPIKLPEKDVWTVNDIQKLVGKLNWASQIYPGIRVKQLCKLIRGTKALTEVVNFTEEAELELAENREILKEPLHGVYYDPGKELVAEIQKQGQGQWTYQIYQELHKNLKTGKYAKMRSAHTNDIKQLVEVVRKVATESIVIWGKTPKFRLPVQKEVWEAWWTDHWQATWIPEWEFVNTPPLVKLWYQLETEPISGAETFYVDGAANRETKLGKAGFVTDRGRQKVVSIADTTNQKAELQAILMALQESGRDVNIVTDSQYAMGIIHSQPDKSESELVSQIIEELIKKERVYLSWVPAHKGIGGNEQVDKLVSSGIRKILFLDGIEKAQEDHDRYHSNWKAMASDFNLPPIVAKEIVASCDKCQLKGEAMHGQVNCSPGVWQLDCTHLEGKIILVAVHVASGYLEAEVIPAETGQETAYFILKLAGRWPVKVIHTDNGSNFTSATVKAACWWANIKQEFGIPYNPQSQGAVESMNKELKKIIGQIRDQAEHLKTAVQMAVFIHNFKRKGGIGGYTAGERIIDIIATDIQTTNLQTQILKVQNFRVYYRDSRDPIWKGPAKLLWKGEGAVVIQDNGDIKVVPRRKAKIIRDYGKQMAGDGCVASGQDENQEME</sequence>
<feature type="initiator methionine" description="Removed; by host" evidence="1">
    <location>
        <position position="1"/>
    </location>
</feature>
<feature type="chain" id="PRO_0000261286" description="Gag-Pol polyprotein">
    <location>
        <begin position="2"/>
        <end position="1449"/>
    </location>
</feature>
<feature type="chain" id="PRO_0000246596" description="Matrix protein p17" evidence="1">
    <location>
        <begin position="2"/>
        <end position="134"/>
    </location>
</feature>
<feature type="chain" id="PRO_0000246597" description="Capsid protein p24" evidence="1">
    <location>
        <begin position="135"/>
        <end position="365"/>
    </location>
</feature>
<feature type="peptide" id="PRO_0000246598" description="Spacer peptide 1" evidence="1">
    <location>
        <begin position="366"/>
        <end position="380" status="uncertain"/>
    </location>
</feature>
<feature type="chain" id="PRO_0000246599" description="Nucleocapsid protein p7" evidence="1">
    <location>
        <begin position="380" status="uncertain"/>
        <end position="434" status="uncertain"/>
    </location>
</feature>
<feature type="peptide" id="PRO_0000246736" description="Transframe peptide" evidence="8">
    <location>
        <begin position="435" status="uncertain"/>
        <end position="442" status="uncertain"/>
    </location>
</feature>
<feature type="chain" id="PRO_0000246600" description="p6-pol" evidence="8">
    <location>
        <begin position="443" status="uncertain"/>
        <end position="497"/>
    </location>
</feature>
<feature type="chain" id="PRO_0000246601" description="Protease" evidence="1">
    <location>
        <begin position="499"/>
        <end position="597"/>
    </location>
</feature>
<feature type="chain" id="PRO_0000246602" description="Reverse transcriptase/ribonuclease H" evidence="1">
    <location>
        <begin position="598"/>
        <end position="1157"/>
    </location>
</feature>
<feature type="chain" id="PRO_0000246603" description="p51 RT" evidence="1">
    <location>
        <begin position="598"/>
        <end position="1037"/>
    </location>
</feature>
<feature type="chain" id="PRO_0000246604" description="p15" evidence="1">
    <location>
        <begin position="1038"/>
        <end position="1157"/>
    </location>
</feature>
<feature type="chain" id="PRO_0000246605" description="Integrase" evidence="1">
    <location>
        <begin position="1158"/>
        <end position="1449"/>
    </location>
</feature>
<feature type="domain" description="Peptidase A2" evidence="10">
    <location>
        <begin position="518"/>
        <end position="587"/>
    </location>
</feature>
<feature type="domain" description="Reverse transcriptase" evidence="11">
    <location>
        <begin position="641"/>
        <end position="831"/>
    </location>
</feature>
<feature type="domain" description="RNase H type-1" evidence="12">
    <location>
        <begin position="1031"/>
        <end position="1154"/>
    </location>
</feature>
<feature type="domain" description="Integrase catalytic" evidence="14">
    <location>
        <begin position="1211"/>
        <end position="1361"/>
    </location>
</feature>
<feature type="zinc finger region" description="CCHC-type 1" evidence="9">
    <location>
        <begin position="393"/>
        <end position="410"/>
    </location>
</feature>
<feature type="zinc finger region" description="CCHC-type 2" evidence="9">
    <location>
        <begin position="414"/>
        <end position="431"/>
    </location>
</feature>
<feature type="zinc finger region" description="Integrase-type" evidence="13">
    <location>
        <begin position="1160"/>
        <end position="1201"/>
    </location>
</feature>
<feature type="DNA-binding region" description="Integrase-type" evidence="15">
    <location>
        <begin position="1380"/>
        <end position="1427"/>
    </location>
</feature>
<feature type="region of interest" description="Interaction with Gp41" evidence="7">
    <location>
        <begin position="7"/>
        <end position="31"/>
    </location>
</feature>
<feature type="region of interest" description="Interaction with host CALM1" evidence="5">
    <location>
        <begin position="8"/>
        <end position="43"/>
    </location>
</feature>
<feature type="region of interest" description="Interaction with host AP3D1" evidence="7">
    <location>
        <begin position="12"/>
        <end position="19"/>
    </location>
</feature>
<feature type="region of interest" description="Interaction with membrane phosphatidylinositol 4,5-bisphosphate and RNA" evidence="7">
    <location>
        <begin position="14"/>
        <end position="33"/>
    </location>
</feature>
<feature type="region of interest" description="Interaction with membrane phosphatidylinositol 4,5-bisphosphate" evidence="7">
    <location>
        <begin position="73"/>
        <end position="77"/>
    </location>
</feature>
<feature type="region of interest" description="Interaction with human PPIA/CYPA and NUP153" evidence="7">
    <location>
        <begin position="191"/>
        <end position="229"/>
    </location>
</feature>
<feature type="region of interest" description="Dimerization/Multimerization of capsid protein p24" evidence="5">
    <location>
        <begin position="279"/>
        <end position="365"/>
    </location>
</feature>
<feature type="region of interest" description="Disordered" evidence="17">
    <location>
        <begin position="447"/>
        <end position="489"/>
    </location>
</feature>
<feature type="region of interest" description="Dimerization of protease" evidence="5">
    <location>
        <begin position="499"/>
        <end position="503"/>
    </location>
</feature>
<feature type="region of interest" description="Dimerization of protease" evidence="5">
    <location>
        <begin position="547"/>
        <end position="553"/>
    </location>
</feature>
<feature type="region of interest" description="Dimerization of protease" evidence="5">
    <location>
        <begin position="586"/>
        <end position="598"/>
    </location>
</feature>
<feature type="region of interest" description="RT 'primer grip'" evidence="1">
    <location>
        <begin position="824"/>
        <end position="832"/>
    </location>
</feature>
<feature type="short sequence motif" description="Nuclear export signal" evidence="1">
    <location>
        <begin position="16"/>
        <end position="22"/>
    </location>
</feature>
<feature type="short sequence motif" description="Nuclear localization signal" evidence="1">
    <location>
        <begin position="26"/>
        <end position="32"/>
    </location>
</feature>
<feature type="short sequence motif" description="Tryptophan repeat motif" evidence="1">
    <location>
        <begin position="995"/>
        <end position="1011"/>
    </location>
</feature>
<feature type="compositionally biased region" description="Basic and acidic residues" evidence="17">
    <location>
        <begin position="447"/>
        <end position="461"/>
    </location>
</feature>
<feature type="active site" description="For protease activity; shared with dimeric partner" evidence="16">
    <location>
        <position position="523"/>
    </location>
</feature>
<feature type="binding site" evidence="1">
    <location>
        <position position="707"/>
    </location>
    <ligand>
        <name>Mg(2+)</name>
        <dbReference type="ChEBI" id="CHEBI:18420"/>
        <label>1</label>
        <note>catalytic; for reverse transcriptase activity</note>
    </ligand>
</feature>
<feature type="binding site" evidence="1">
    <location>
        <position position="782"/>
    </location>
    <ligand>
        <name>Mg(2+)</name>
        <dbReference type="ChEBI" id="CHEBI:18420"/>
        <label>1</label>
        <note>catalytic; for reverse transcriptase activity</note>
    </ligand>
</feature>
<feature type="binding site" evidence="1">
    <location>
        <position position="783"/>
    </location>
    <ligand>
        <name>Mg(2+)</name>
        <dbReference type="ChEBI" id="CHEBI:18420"/>
        <label>1</label>
        <note>catalytic; for reverse transcriptase activity</note>
    </ligand>
</feature>
<feature type="binding site" evidence="1">
    <location>
        <position position="1040"/>
    </location>
    <ligand>
        <name>Mg(2+)</name>
        <dbReference type="ChEBI" id="CHEBI:18420"/>
        <label>2</label>
        <note>catalytic; for RNase H activity</note>
    </ligand>
</feature>
<feature type="binding site" evidence="1">
    <location>
        <position position="1075"/>
    </location>
    <ligand>
        <name>Mg(2+)</name>
        <dbReference type="ChEBI" id="CHEBI:18420"/>
        <label>2</label>
        <note>catalytic; for RNase H activity</note>
    </ligand>
</feature>
<feature type="binding site" evidence="1">
    <location>
        <position position="1095"/>
    </location>
    <ligand>
        <name>Mg(2+)</name>
        <dbReference type="ChEBI" id="CHEBI:18420"/>
        <label>2</label>
        <note>catalytic; for RNase H activity</note>
    </ligand>
</feature>
<feature type="binding site" evidence="1">
    <location>
        <position position="1146"/>
    </location>
    <ligand>
        <name>Mg(2+)</name>
        <dbReference type="ChEBI" id="CHEBI:18420"/>
        <label>2</label>
        <note>catalytic; for RNase H activity</note>
    </ligand>
</feature>
<feature type="binding site" evidence="13">
    <location>
        <position position="1169"/>
    </location>
    <ligand>
        <name>Zn(2+)</name>
        <dbReference type="ChEBI" id="CHEBI:29105"/>
    </ligand>
</feature>
<feature type="binding site" evidence="13">
    <location>
        <position position="1173"/>
    </location>
    <ligand>
        <name>Zn(2+)</name>
        <dbReference type="ChEBI" id="CHEBI:29105"/>
    </ligand>
</feature>
<feature type="binding site" evidence="13">
    <location>
        <position position="1197"/>
    </location>
    <ligand>
        <name>Zn(2+)</name>
        <dbReference type="ChEBI" id="CHEBI:29105"/>
    </ligand>
</feature>
<feature type="binding site" evidence="13">
    <location>
        <position position="1200"/>
    </location>
    <ligand>
        <name>Zn(2+)</name>
        <dbReference type="ChEBI" id="CHEBI:29105"/>
    </ligand>
</feature>
<feature type="binding site" evidence="1">
    <location>
        <position position="1221"/>
    </location>
    <ligand>
        <name>Mg(2+)</name>
        <dbReference type="ChEBI" id="CHEBI:18420"/>
        <label>3</label>
        <note>catalytic; for integrase activity</note>
    </ligand>
</feature>
<feature type="binding site" evidence="1">
    <location>
        <position position="1273"/>
    </location>
    <ligand>
        <name>Mg(2+)</name>
        <dbReference type="ChEBI" id="CHEBI:18420"/>
        <label>3</label>
        <note>catalytic; for integrase activity</note>
    </ligand>
</feature>
<feature type="binding site" evidence="5">
    <location>
        <position position="1309"/>
    </location>
    <ligand>
        <name>Mg(2+)</name>
        <dbReference type="ChEBI" id="CHEBI:18420"/>
        <label>3</label>
        <note>catalytic; for integrase activity</note>
    </ligand>
</feature>
<feature type="site" description="Cleavage; by viral protease" evidence="1">
    <location>
        <begin position="134"/>
        <end position="135"/>
    </location>
</feature>
<feature type="site" description="Cis/trans isomerization of proline peptide bond; by human PPIA/CYPA" evidence="1">
    <location>
        <begin position="223"/>
        <end position="224"/>
    </location>
</feature>
<feature type="site" description="Cleavage; by viral protease" evidence="1">
    <location>
        <begin position="365"/>
        <end position="366"/>
    </location>
</feature>
<feature type="site" description="Cleavage; by viral protease" evidence="8">
    <location>
        <begin position="379" status="uncertain"/>
        <end position="380" status="uncertain"/>
    </location>
</feature>
<feature type="site" description="Cleavage; by viral protease" evidence="8">
    <location>
        <begin position="434" status="uncertain"/>
        <end position="435" status="uncertain"/>
    </location>
</feature>
<feature type="site" description="Cleavage; by viral protease" evidence="8">
    <location>
        <begin position="442" status="uncertain"/>
        <end position="443" status="uncertain"/>
    </location>
</feature>
<feature type="site" description="Cleavage; by viral protease" evidence="1">
    <location>
        <begin position="497"/>
        <end position="498"/>
    </location>
</feature>
<feature type="site" description="Cleavage; by viral protease" evidence="1">
    <location>
        <begin position="596"/>
        <end position="597"/>
    </location>
</feature>
<feature type="site" description="Essential for RT p66/p51 heterodimerization" evidence="1">
    <location>
        <position position="997"/>
    </location>
</feature>
<feature type="site" description="Essential for RT p66/p51 heterodimerization" evidence="1">
    <location>
        <begin position="1010"/>
        <end position="1011"/>
    </location>
</feature>
<feature type="site" description="Cleavage; by viral protease; partial" evidence="1">
    <location>
        <begin position="1037"/>
        <end position="1038"/>
    </location>
</feature>
<feature type="site" description="Cleavage; by viral protease" evidence="1">
    <location>
        <begin position="1157"/>
        <end position="1158"/>
    </location>
</feature>
<feature type="modified residue" description="Phosphotyrosine; by host" evidence="1">
    <location>
        <position position="134"/>
    </location>
</feature>
<feature type="lipid moiety-binding region" description="N-myristoyl glycine; by host" evidence="1">
    <location>
        <position position="2"/>
    </location>
</feature>
<protein>
    <recommendedName>
        <fullName>Gag-Pol polyprotein</fullName>
    </recommendedName>
    <alternativeName>
        <fullName>Pr160Gag-Pol</fullName>
    </alternativeName>
    <component>
        <recommendedName>
            <fullName>Matrix protein p17</fullName>
            <shortName>MA</shortName>
        </recommendedName>
    </component>
    <component>
        <recommendedName>
            <fullName>Capsid protein p24</fullName>
            <shortName>CA</shortName>
        </recommendedName>
    </component>
    <component>
        <recommendedName>
            <fullName evidence="7">Spacer peptide 1</fullName>
            <shortName>SP1</shortName>
        </recommendedName>
        <alternativeName>
            <fullName>p2</fullName>
        </alternativeName>
    </component>
    <component>
        <recommendedName>
            <fullName>Nucleocapsid protein p7</fullName>
            <shortName>NC</shortName>
        </recommendedName>
    </component>
    <component>
        <recommendedName>
            <fullName>Transframe peptide</fullName>
            <shortName>TF</shortName>
        </recommendedName>
    </component>
    <component>
        <recommendedName>
            <fullName>p6-pol</fullName>
            <shortName>p6*</shortName>
        </recommendedName>
    </component>
    <component>
        <recommendedName>
            <fullName>Protease</fullName>
            <ecNumber>3.4.23.16</ecNumber>
        </recommendedName>
        <alternativeName>
            <fullName>PR</fullName>
        </alternativeName>
        <alternativeName>
            <fullName>Retropepsin</fullName>
        </alternativeName>
    </component>
    <component>
        <recommendedName>
            <fullName>Reverse transcriptase/ribonuclease H</fullName>
            <ecNumber>2.7.7.49</ecNumber>
            <ecNumber>2.7.7.7</ecNumber>
            <ecNumber>3.1.26.13</ecNumber>
        </recommendedName>
        <alternativeName>
            <fullName>Exoribonuclease H</fullName>
            <ecNumber>3.1.13.2</ecNumber>
        </alternativeName>
        <alternativeName>
            <fullName>p66 RT</fullName>
        </alternativeName>
    </component>
    <component>
        <recommendedName>
            <fullName>p51 RT</fullName>
        </recommendedName>
    </component>
    <component>
        <recommendedName>
            <fullName>p15</fullName>
        </recommendedName>
    </component>
    <component>
        <recommendedName>
            <fullName>Integrase</fullName>
            <shortName>IN</shortName>
            <ecNumber evidence="5">2.7.7.-</ecNumber>
            <ecNumber evidence="5">3.1.-.-</ecNumber>
        </recommendedName>
    </component>
</protein>
<name>POL_HV1YF</name>